<keyword id="KW-0963">Cytoplasm</keyword>
<keyword id="KW-0274">FAD</keyword>
<keyword id="KW-0285">Flavoprotein</keyword>
<keyword id="KW-0520">NAD</keyword>
<keyword id="KW-1185">Reference proteome</keyword>
<keyword id="KW-0819">tRNA processing</keyword>
<gene>
    <name evidence="1" type="primary">mnmG</name>
    <name evidence="1" type="synonym">gidA</name>
    <name type="ordered locus">Dshi_3455</name>
</gene>
<evidence type="ECO:0000255" key="1">
    <source>
        <dbReference type="HAMAP-Rule" id="MF_00129"/>
    </source>
</evidence>
<sequence>MKQQAFDVIVIGGGHAGTEAAAAAARLGVQVALITLERSGIGVMSCNPAIGGLGKGHLVREIDAMDGVMGRVADKAGIQFRLLNRRKGPAVQGPRSQSDRDVYRSEMLAEMESLPNLRILEGEVADLITSGTRIEGVCLADGSEVTARAVVVTTGTFLRGIIHIGNRSFQGGRMGAAPSVRLAERFDSFGLPLGRLKTGTPPRLDKRSIAWDKLEPQPGDEDPTLFSFLSAGPHLRQVHCAVTHTNERTHEIIRKNLSRSAMYGGSIEGVGPRYCPSIEDKVVRFSDKTSHQIFLEPEGLDSTTIYPNGISTSLPEDVQEAYVRSISGLENAKITQPGYAIEYDYVDPRALDAALRVKGFDGLYLAGQINGTTGYEEAAAQGLVAGLNAALEGKGKFLPSRMTSYIGVMIDDLITQGVAEPYRMFTSRAEYRLSLRCDNADQRLTPEGLVLGCVGKERRIKFEKKMGLLDETLKKLKSFEVTPKQANEAGIRVNEDGRRRSGLDLLSLSNVSYESLAATWPELQASTEIAKQAKIEATYANYIERQQRDVMALKKDEEIEFPPRFDFSGLSGLSNELKSKLTAVRPSTLGQAARIEGMTPAALTLLLASLRKAEKRRSA</sequence>
<protein>
    <recommendedName>
        <fullName evidence="1">tRNA uridine 5-carboxymethylaminomethyl modification enzyme MnmG</fullName>
    </recommendedName>
    <alternativeName>
        <fullName evidence="1">Glucose-inhibited division protein A</fullName>
    </alternativeName>
</protein>
<reference key="1">
    <citation type="journal article" date="2010" name="ISME J.">
        <title>The complete genome sequence of the algal symbiont Dinoroseobacter shibae: a hitchhiker's guide to life in the sea.</title>
        <authorList>
            <person name="Wagner-Dobler I."/>
            <person name="Ballhausen B."/>
            <person name="Berger M."/>
            <person name="Brinkhoff T."/>
            <person name="Buchholz I."/>
            <person name="Bunk B."/>
            <person name="Cypionka H."/>
            <person name="Daniel R."/>
            <person name="Drepper T."/>
            <person name="Gerdts G."/>
            <person name="Hahnke S."/>
            <person name="Han C."/>
            <person name="Jahn D."/>
            <person name="Kalhoefer D."/>
            <person name="Kiss H."/>
            <person name="Klenk H.P."/>
            <person name="Kyrpides N."/>
            <person name="Liebl W."/>
            <person name="Liesegang H."/>
            <person name="Meincke L."/>
            <person name="Pati A."/>
            <person name="Petersen J."/>
            <person name="Piekarski T."/>
            <person name="Pommerenke C."/>
            <person name="Pradella S."/>
            <person name="Pukall R."/>
            <person name="Rabus R."/>
            <person name="Stackebrandt E."/>
            <person name="Thole S."/>
            <person name="Thompson L."/>
            <person name="Tielen P."/>
            <person name="Tomasch J."/>
            <person name="von Jan M."/>
            <person name="Wanphrut N."/>
            <person name="Wichels A."/>
            <person name="Zech H."/>
            <person name="Simon M."/>
        </authorList>
    </citation>
    <scope>NUCLEOTIDE SEQUENCE [LARGE SCALE GENOMIC DNA]</scope>
    <source>
        <strain>DSM 16493 / NCIMB 14021 / DFL 12</strain>
    </source>
</reference>
<name>MNMG_DINSH</name>
<dbReference type="EMBL" id="CP000830">
    <property type="protein sequence ID" value="ABV95188.1"/>
    <property type="molecule type" value="Genomic_DNA"/>
</dbReference>
<dbReference type="RefSeq" id="WP_012180112.1">
    <property type="nucleotide sequence ID" value="NC_009952.1"/>
</dbReference>
<dbReference type="SMR" id="A8LPC3"/>
<dbReference type="STRING" id="398580.Dshi_3455"/>
<dbReference type="KEGG" id="dsh:Dshi_3455"/>
<dbReference type="eggNOG" id="COG0445">
    <property type="taxonomic scope" value="Bacteria"/>
</dbReference>
<dbReference type="HOGENOM" id="CLU_007831_2_2_5"/>
<dbReference type="OrthoDB" id="9815560at2"/>
<dbReference type="Proteomes" id="UP000006833">
    <property type="component" value="Chromosome"/>
</dbReference>
<dbReference type="GO" id="GO:0005829">
    <property type="term" value="C:cytosol"/>
    <property type="evidence" value="ECO:0007669"/>
    <property type="project" value="TreeGrafter"/>
</dbReference>
<dbReference type="GO" id="GO:0050660">
    <property type="term" value="F:flavin adenine dinucleotide binding"/>
    <property type="evidence" value="ECO:0007669"/>
    <property type="project" value="UniProtKB-UniRule"/>
</dbReference>
<dbReference type="GO" id="GO:0030488">
    <property type="term" value="P:tRNA methylation"/>
    <property type="evidence" value="ECO:0007669"/>
    <property type="project" value="TreeGrafter"/>
</dbReference>
<dbReference type="GO" id="GO:0002098">
    <property type="term" value="P:tRNA wobble uridine modification"/>
    <property type="evidence" value="ECO:0007669"/>
    <property type="project" value="InterPro"/>
</dbReference>
<dbReference type="FunFam" id="3.50.50.60:FF:000082">
    <property type="entry name" value="protein MTO1 homolog, mitochondrial isoform X1"/>
    <property type="match status" value="1"/>
</dbReference>
<dbReference type="FunFam" id="1.10.150.570:FF:000001">
    <property type="entry name" value="tRNA uridine 5-carboxymethylaminomethyl modification enzyme MnmG"/>
    <property type="match status" value="1"/>
</dbReference>
<dbReference type="FunFam" id="3.50.50.60:FF:000002">
    <property type="entry name" value="tRNA uridine 5-carboxymethylaminomethyl modification enzyme MnmG"/>
    <property type="match status" value="1"/>
</dbReference>
<dbReference type="Gene3D" id="3.50.50.60">
    <property type="entry name" value="FAD/NAD(P)-binding domain"/>
    <property type="match status" value="2"/>
</dbReference>
<dbReference type="Gene3D" id="1.10.150.570">
    <property type="entry name" value="GidA associated domain, C-terminal subdomain"/>
    <property type="match status" value="1"/>
</dbReference>
<dbReference type="Gene3D" id="1.10.10.1800">
    <property type="entry name" value="tRNA uridine 5-carboxymethylaminomethyl modification enzyme MnmG/GidA"/>
    <property type="match status" value="1"/>
</dbReference>
<dbReference type="HAMAP" id="MF_00129">
    <property type="entry name" value="MnmG_GidA"/>
    <property type="match status" value="1"/>
</dbReference>
<dbReference type="InterPro" id="IPR036188">
    <property type="entry name" value="FAD/NAD-bd_sf"/>
</dbReference>
<dbReference type="InterPro" id="IPR049312">
    <property type="entry name" value="GIDA_C_N"/>
</dbReference>
<dbReference type="InterPro" id="IPR004416">
    <property type="entry name" value="MnmG"/>
</dbReference>
<dbReference type="InterPro" id="IPR002218">
    <property type="entry name" value="MnmG-rel"/>
</dbReference>
<dbReference type="InterPro" id="IPR020595">
    <property type="entry name" value="MnmG-rel_CS"/>
</dbReference>
<dbReference type="InterPro" id="IPR026904">
    <property type="entry name" value="MnmG_C"/>
</dbReference>
<dbReference type="InterPro" id="IPR047001">
    <property type="entry name" value="MnmG_C_subdom"/>
</dbReference>
<dbReference type="InterPro" id="IPR044920">
    <property type="entry name" value="MnmG_C_subdom_sf"/>
</dbReference>
<dbReference type="InterPro" id="IPR040131">
    <property type="entry name" value="MnmG_N"/>
</dbReference>
<dbReference type="NCBIfam" id="TIGR00136">
    <property type="entry name" value="mnmG_gidA"/>
    <property type="match status" value="1"/>
</dbReference>
<dbReference type="PANTHER" id="PTHR11806">
    <property type="entry name" value="GLUCOSE INHIBITED DIVISION PROTEIN A"/>
    <property type="match status" value="1"/>
</dbReference>
<dbReference type="PANTHER" id="PTHR11806:SF0">
    <property type="entry name" value="PROTEIN MTO1 HOMOLOG, MITOCHONDRIAL"/>
    <property type="match status" value="1"/>
</dbReference>
<dbReference type="Pfam" id="PF01134">
    <property type="entry name" value="GIDA"/>
    <property type="match status" value="1"/>
</dbReference>
<dbReference type="Pfam" id="PF21680">
    <property type="entry name" value="GIDA_C_1st"/>
    <property type="match status" value="1"/>
</dbReference>
<dbReference type="Pfam" id="PF13932">
    <property type="entry name" value="SAM_GIDA_C"/>
    <property type="match status" value="1"/>
</dbReference>
<dbReference type="PRINTS" id="PR00411">
    <property type="entry name" value="PNDRDTASEI"/>
</dbReference>
<dbReference type="SMART" id="SM01228">
    <property type="entry name" value="GIDA_assoc_3"/>
    <property type="match status" value="1"/>
</dbReference>
<dbReference type="SUPFAM" id="SSF51905">
    <property type="entry name" value="FAD/NAD(P)-binding domain"/>
    <property type="match status" value="1"/>
</dbReference>
<dbReference type="PROSITE" id="PS01280">
    <property type="entry name" value="GIDA_1"/>
    <property type="match status" value="1"/>
</dbReference>
<dbReference type="PROSITE" id="PS01281">
    <property type="entry name" value="GIDA_2"/>
    <property type="match status" value="1"/>
</dbReference>
<organism>
    <name type="scientific">Dinoroseobacter shibae (strain DSM 16493 / NCIMB 14021 / DFL 12)</name>
    <dbReference type="NCBI Taxonomy" id="398580"/>
    <lineage>
        <taxon>Bacteria</taxon>
        <taxon>Pseudomonadati</taxon>
        <taxon>Pseudomonadota</taxon>
        <taxon>Alphaproteobacteria</taxon>
        <taxon>Rhodobacterales</taxon>
        <taxon>Roseobacteraceae</taxon>
        <taxon>Dinoroseobacter</taxon>
    </lineage>
</organism>
<feature type="chain" id="PRO_1000076316" description="tRNA uridine 5-carboxymethylaminomethyl modification enzyme MnmG">
    <location>
        <begin position="1"/>
        <end position="619"/>
    </location>
</feature>
<feature type="binding site" evidence="1">
    <location>
        <begin position="12"/>
        <end position="17"/>
    </location>
    <ligand>
        <name>FAD</name>
        <dbReference type="ChEBI" id="CHEBI:57692"/>
    </ligand>
</feature>
<feature type="binding site" evidence="1">
    <location>
        <position position="124"/>
    </location>
    <ligand>
        <name>FAD</name>
        <dbReference type="ChEBI" id="CHEBI:57692"/>
    </ligand>
</feature>
<feature type="binding site" evidence="1">
    <location>
        <position position="179"/>
    </location>
    <ligand>
        <name>FAD</name>
        <dbReference type="ChEBI" id="CHEBI:57692"/>
    </ligand>
</feature>
<feature type="binding site" evidence="1">
    <location>
        <begin position="271"/>
        <end position="285"/>
    </location>
    <ligand>
        <name>NAD(+)</name>
        <dbReference type="ChEBI" id="CHEBI:57540"/>
    </ligand>
</feature>
<feature type="binding site" evidence="1">
    <location>
        <position position="368"/>
    </location>
    <ligand>
        <name>FAD</name>
        <dbReference type="ChEBI" id="CHEBI:57692"/>
    </ligand>
</feature>
<proteinExistence type="inferred from homology"/>
<accession>A8LPC3</accession>
<comment type="function">
    <text evidence="1">NAD-binding protein involved in the addition of a carboxymethylaminomethyl (cmnm) group at the wobble position (U34) of certain tRNAs, forming tRNA-cmnm(5)s(2)U34.</text>
</comment>
<comment type="cofactor">
    <cofactor evidence="1">
        <name>FAD</name>
        <dbReference type="ChEBI" id="CHEBI:57692"/>
    </cofactor>
</comment>
<comment type="subunit">
    <text evidence="1">Homodimer. Heterotetramer of two MnmE and two MnmG subunits.</text>
</comment>
<comment type="subcellular location">
    <subcellularLocation>
        <location evidence="1">Cytoplasm</location>
    </subcellularLocation>
</comment>
<comment type="similarity">
    <text evidence="1">Belongs to the MnmG family.</text>
</comment>